<name>CLPB_MALP2</name>
<accession>Q8EW28</accession>
<protein>
    <recommendedName>
        <fullName>Chaperone protein ClpB</fullName>
    </recommendedName>
</protein>
<keyword id="KW-0067">ATP-binding</keyword>
<keyword id="KW-0143">Chaperone</keyword>
<keyword id="KW-0175">Coiled coil</keyword>
<keyword id="KW-0963">Cytoplasm</keyword>
<keyword id="KW-0547">Nucleotide-binding</keyword>
<keyword id="KW-1185">Reference proteome</keyword>
<keyword id="KW-0677">Repeat</keyword>
<keyword id="KW-0346">Stress response</keyword>
<reference key="1">
    <citation type="journal article" date="2002" name="Nucleic Acids Res.">
        <title>The complete genomic sequence of Mycoplasma penetrans, an intracellular bacterial pathogen in humans.</title>
        <authorList>
            <person name="Sasaki Y."/>
            <person name="Ishikawa J."/>
            <person name="Yamashita A."/>
            <person name="Oshima K."/>
            <person name="Kenri T."/>
            <person name="Furuya K."/>
            <person name="Yoshino C."/>
            <person name="Horino A."/>
            <person name="Shiba T."/>
            <person name="Sasaki T."/>
            <person name="Hattori M."/>
        </authorList>
    </citation>
    <scope>NUCLEOTIDE SEQUENCE [LARGE SCALE GENOMIC DNA]</scope>
    <source>
        <strain>HF-2</strain>
    </source>
</reference>
<organism>
    <name type="scientific">Malacoplasma penetrans (strain HF-2)</name>
    <name type="common">Mycoplasma penetrans</name>
    <dbReference type="NCBI Taxonomy" id="272633"/>
    <lineage>
        <taxon>Bacteria</taxon>
        <taxon>Bacillati</taxon>
        <taxon>Mycoplasmatota</taxon>
        <taxon>Mycoplasmoidales</taxon>
        <taxon>Mycoplasmoidaceae</taxon>
        <taxon>Malacoplasma</taxon>
    </lineage>
</organism>
<comment type="function">
    <text evidence="1">Part of a stress-induced multi-chaperone system, it is involved in the recovery of the cell from heat-induced damage, in cooperation with DnaK, DnaJ and GrpE. Acts before DnaK, in the processing of protein aggregates. Protein binding stimulates the ATPase activity; ATP hydrolysis unfolds the denatured protein aggregates, which probably helps expose new hydrophobic binding sites on the surface of ClpB-bound aggregates, contributing to the solubilization and refolding of denatured protein aggregates by DnaK (By similarity).</text>
</comment>
<comment type="subunit">
    <text evidence="1">Homohexamer. The oligomerization is ATP-dependent (By similarity).</text>
</comment>
<comment type="subcellular location">
    <subcellularLocation>
        <location evidence="2">Cytoplasm</location>
    </subcellularLocation>
</comment>
<comment type="domain">
    <text evidence="1">The N-terminal domain probably functions as a substrate-discriminating domain, recruiting aggregated proteins to the ClpB hexamer and/or stabilizing bound proteins. The NBD2 domain is responsible for oligomerization, whereas the NBD1 domain stabilizes the hexamer probably in an ATP-dependent manner. The movement of the coiled-coil domain is essential for ClpB ability to rescue proteins from an aggregated state, probably by pulling apart large aggregated proteins, which are bound between the coiled-coils motifs of adjacent ClpB subunits in the functional hexamer (By similarity).</text>
</comment>
<comment type="similarity">
    <text evidence="2">Belongs to the ClpA/ClpB family.</text>
</comment>
<feature type="chain" id="PRO_0000191144" description="Chaperone protein ClpB">
    <location>
        <begin position="1"/>
        <end position="705"/>
    </location>
</feature>
<feature type="region of interest" description="NBD1" evidence="1">
    <location>
        <begin position="12"/>
        <end position="195"/>
    </location>
</feature>
<feature type="region of interest" description="Linker" evidence="1">
    <location>
        <begin position="196"/>
        <end position="399"/>
    </location>
</feature>
<feature type="region of interest" description="NBD2" evidence="1">
    <location>
        <begin position="409"/>
        <end position="611"/>
    </location>
</feature>
<feature type="region of interest" description="C-terminal" evidence="1">
    <location>
        <begin position="612"/>
        <end position="705"/>
    </location>
</feature>
<feature type="coiled-coil region" evidence="1">
    <location>
        <begin position="246"/>
        <end position="378"/>
    </location>
</feature>
<feature type="binding site" evidence="1">
    <location>
        <begin position="59"/>
        <end position="66"/>
    </location>
    <ligand>
        <name>ATP</name>
        <dbReference type="ChEBI" id="CHEBI:30616"/>
        <label>1</label>
    </ligand>
</feature>
<feature type="binding site" evidence="1">
    <location>
        <begin position="459"/>
        <end position="466"/>
    </location>
    <ligand>
        <name>ATP</name>
        <dbReference type="ChEBI" id="CHEBI:30616"/>
        <label>2</label>
    </ligand>
</feature>
<sequence>MEFNFEPSNEKDILKKYSRNLNEEVSANKLNKIIGREQEIRRVIEILSRKEKNNPVLIGEPGVGKTAIVEGFVQKIISKEVPENLVHCVVYEVNLSSLIAGTFLQGEFEKRLNALIKEAKQNNGAVILFIDEIHQLMGMGKAGNNSGMDAANILKPIMARGEIKIIGATTSNEYRQYIEKDGALERRFQKILVEEPTPEEALTIMRGLKEKWEIYHKVRIQDNALVASVKLSERYISDKYLPDKAIDLIDEAAAKIKTEAHTSPSEPINKKIFYLETEKIALSKEEGTNQKERINEIEIELEKLKQERDLVEKEWKEQKEQQVALNKIKKEIEKNNWDVERYQNQGEYTEASKILYSVLPELKKKLEAIEKSISENKKVLIKDYISEIDVAEIISRITKIPLNKIFEKEQDKLLNLFNNLKKRVKGQDEALKLVSDTVLKNRVGINNPNRPIGSFLFVGPTGVGKTEVAKSLAENLFNTEKAIVRINMSEYMEKHSISRLIGAPPGYIGYEQAGELSEQIRRKPYSVVLLDEIEKAHPDILNVLLQVLDEGTLKDNQGRNINFKNTIIIMTSNVGALYLMENKEDMFERELKTSFKPEFLNRIDEIIKFNSITMEFAKEIAQKMLDDLEKRLKDNNYQITFDKSVVEYVAKNGYSKEYGARPINRFIQKTIENFITESILKNELIKDRSTIINFANNKLAILKSN</sequence>
<proteinExistence type="inferred from homology"/>
<gene>
    <name type="primary">clpB</name>
    <name type="ordered locus">MYPE3790</name>
</gene>
<dbReference type="EMBL" id="BA000026">
    <property type="protein sequence ID" value="BAC44168.1"/>
    <property type="molecule type" value="Genomic_DNA"/>
</dbReference>
<dbReference type="RefSeq" id="WP_011077204.1">
    <property type="nucleotide sequence ID" value="NC_004432.1"/>
</dbReference>
<dbReference type="SMR" id="Q8EW28"/>
<dbReference type="FunCoup" id="Q8EW28">
    <property type="interactions" value="235"/>
</dbReference>
<dbReference type="STRING" id="272633.gene:10731494"/>
<dbReference type="KEGG" id="mpe:MYPE3790"/>
<dbReference type="eggNOG" id="COG0542">
    <property type="taxonomic scope" value="Bacteria"/>
</dbReference>
<dbReference type="HOGENOM" id="CLU_005070_4_0_14"/>
<dbReference type="InParanoid" id="Q8EW28"/>
<dbReference type="Proteomes" id="UP000002522">
    <property type="component" value="Chromosome"/>
</dbReference>
<dbReference type="GO" id="GO:0005737">
    <property type="term" value="C:cytoplasm"/>
    <property type="evidence" value="ECO:0007669"/>
    <property type="project" value="UniProtKB-SubCell"/>
</dbReference>
<dbReference type="GO" id="GO:0005524">
    <property type="term" value="F:ATP binding"/>
    <property type="evidence" value="ECO:0007669"/>
    <property type="project" value="UniProtKB-KW"/>
</dbReference>
<dbReference type="GO" id="GO:0016887">
    <property type="term" value="F:ATP hydrolysis activity"/>
    <property type="evidence" value="ECO:0007669"/>
    <property type="project" value="InterPro"/>
</dbReference>
<dbReference type="GO" id="GO:0034605">
    <property type="term" value="P:cellular response to heat"/>
    <property type="evidence" value="ECO:0007669"/>
    <property type="project" value="TreeGrafter"/>
</dbReference>
<dbReference type="CDD" id="cd00009">
    <property type="entry name" value="AAA"/>
    <property type="match status" value="1"/>
</dbReference>
<dbReference type="CDD" id="cd19499">
    <property type="entry name" value="RecA-like_ClpB_Hsp104-like"/>
    <property type="match status" value="1"/>
</dbReference>
<dbReference type="FunFam" id="3.40.50.300:FF:000120">
    <property type="entry name" value="ATP-dependent chaperone ClpB"/>
    <property type="match status" value="1"/>
</dbReference>
<dbReference type="FunFam" id="3.40.50.300:FF:000025">
    <property type="entry name" value="ATP-dependent Clp protease subunit"/>
    <property type="match status" value="1"/>
</dbReference>
<dbReference type="Gene3D" id="1.10.8.60">
    <property type="match status" value="1"/>
</dbReference>
<dbReference type="Gene3D" id="3.40.50.300">
    <property type="entry name" value="P-loop containing nucleotide triphosphate hydrolases"/>
    <property type="match status" value="3"/>
</dbReference>
<dbReference type="InterPro" id="IPR003593">
    <property type="entry name" value="AAA+_ATPase"/>
</dbReference>
<dbReference type="InterPro" id="IPR003959">
    <property type="entry name" value="ATPase_AAA_core"/>
</dbReference>
<dbReference type="InterPro" id="IPR019489">
    <property type="entry name" value="Clp_ATPase_C"/>
</dbReference>
<dbReference type="InterPro" id="IPR001270">
    <property type="entry name" value="ClpA/B"/>
</dbReference>
<dbReference type="InterPro" id="IPR018368">
    <property type="entry name" value="ClpA/B_CS1"/>
</dbReference>
<dbReference type="InterPro" id="IPR028299">
    <property type="entry name" value="ClpA/B_CS2"/>
</dbReference>
<dbReference type="InterPro" id="IPR041546">
    <property type="entry name" value="ClpA/ClpB_AAA_lid"/>
</dbReference>
<dbReference type="InterPro" id="IPR050130">
    <property type="entry name" value="ClpA_ClpB"/>
</dbReference>
<dbReference type="InterPro" id="IPR027417">
    <property type="entry name" value="P-loop_NTPase"/>
</dbReference>
<dbReference type="PANTHER" id="PTHR11638">
    <property type="entry name" value="ATP-DEPENDENT CLP PROTEASE"/>
    <property type="match status" value="1"/>
</dbReference>
<dbReference type="PANTHER" id="PTHR11638:SF18">
    <property type="entry name" value="HEAT SHOCK PROTEIN 104"/>
    <property type="match status" value="1"/>
</dbReference>
<dbReference type="Pfam" id="PF00004">
    <property type="entry name" value="AAA"/>
    <property type="match status" value="1"/>
</dbReference>
<dbReference type="Pfam" id="PF07724">
    <property type="entry name" value="AAA_2"/>
    <property type="match status" value="1"/>
</dbReference>
<dbReference type="Pfam" id="PF17871">
    <property type="entry name" value="AAA_lid_9"/>
    <property type="match status" value="1"/>
</dbReference>
<dbReference type="Pfam" id="PF10431">
    <property type="entry name" value="ClpB_D2-small"/>
    <property type="match status" value="1"/>
</dbReference>
<dbReference type="PRINTS" id="PR00300">
    <property type="entry name" value="CLPPROTEASEA"/>
</dbReference>
<dbReference type="SMART" id="SM00382">
    <property type="entry name" value="AAA"/>
    <property type="match status" value="2"/>
</dbReference>
<dbReference type="SMART" id="SM01086">
    <property type="entry name" value="ClpB_D2-small"/>
    <property type="match status" value="1"/>
</dbReference>
<dbReference type="SUPFAM" id="SSF52540">
    <property type="entry name" value="P-loop containing nucleoside triphosphate hydrolases"/>
    <property type="match status" value="2"/>
</dbReference>
<dbReference type="PROSITE" id="PS00870">
    <property type="entry name" value="CLPAB_1"/>
    <property type="match status" value="1"/>
</dbReference>
<dbReference type="PROSITE" id="PS00871">
    <property type="entry name" value="CLPAB_2"/>
    <property type="match status" value="1"/>
</dbReference>
<evidence type="ECO:0000250" key="1"/>
<evidence type="ECO:0000305" key="2"/>